<evidence type="ECO:0000255" key="1">
    <source>
        <dbReference type="HAMAP-Rule" id="MF_01350"/>
    </source>
</evidence>
<name>NUOH_VEREI</name>
<gene>
    <name evidence="1" type="primary">nuoH</name>
    <name type="ordered locus">Veis_2806</name>
</gene>
<reference key="1">
    <citation type="submission" date="2006-12" db="EMBL/GenBank/DDBJ databases">
        <title>Complete sequence of chromosome 1 of Verminephrobacter eiseniae EF01-2.</title>
        <authorList>
            <person name="Copeland A."/>
            <person name="Lucas S."/>
            <person name="Lapidus A."/>
            <person name="Barry K."/>
            <person name="Detter J.C."/>
            <person name="Glavina del Rio T."/>
            <person name="Dalin E."/>
            <person name="Tice H."/>
            <person name="Pitluck S."/>
            <person name="Chertkov O."/>
            <person name="Brettin T."/>
            <person name="Bruce D."/>
            <person name="Han C."/>
            <person name="Tapia R."/>
            <person name="Gilna P."/>
            <person name="Schmutz J."/>
            <person name="Larimer F."/>
            <person name="Land M."/>
            <person name="Hauser L."/>
            <person name="Kyrpides N."/>
            <person name="Kim E."/>
            <person name="Stahl D."/>
            <person name="Richardson P."/>
        </authorList>
    </citation>
    <scope>NUCLEOTIDE SEQUENCE [LARGE SCALE GENOMIC DNA]</scope>
    <source>
        <strain>EF01-2</strain>
    </source>
</reference>
<sequence length="360" mass="39568">MIDALYQAGLQLLPGGWWTGMVWPVLWILLKIVALLIPLMGAVAYLTLWERKLLGFMQVRHGPNRVGPWGLLQPIADALKLLTKEIIQPTAASRGLFVLGPVMAIMPALAAWVVIPFGPDVALANVNAGLLLVMAITSIEVYGVIIAGWASNSKYAFLGALRASAQMVSYEIAMGFCLLIVIMVSGSMNLTEIVLAQGRGVAAANGIGFLSWNWLPLLPVFLVYLISGVAETNRHPFDVVEGEAEIVAGHMVEYSGMGFAIFFLAEYASMWLVSILAALMFLGGWLPPVDSASLHWIPGWIWLGIKTCLVVSMFIWIRATFPRFRYDQIMRLGWKIFIPVTLACLLIAGGWLLSPWNIWK</sequence>
<feature type="chain" id="PRO_0000298856" description="NADH-quinone oxidoreductase subunit H">
    <location>
        <begin position="1"/>
        <end position="360"/>
    </location>
</feature>
<feature type="transmembrane region" description="Helical" evidence="1">
    <location>
        <begin position="20"/>
        <end position="40"/>
    </location>
</feature>
<feature type="transmembrane region" description="Helical" evidence="1">
    <location>
        <begin position="95"/>
        <end position="115"/>
    </location>
</feature>
<feature type="transmembrane region" description="Helical" evidence="1">
    <location>
        <begin position="130"/>
        <end position="150"/>
    </location>
</feature>
<feature type="transmembrane region" description="Helical" evidence="1">
    <location>
        <begin position="176"/>
        <end position="196"/>
    </location>
</feature>
<feature type="transmembrane region" description="Helical" evidence="1">
    <location>
        <begin position="206"/>
        <end position="226"/>
    </location>
</feature>
<feature type="transmembrane region" description="Helical" evidence="1">
    <location>
        <begin position="261"/>
        <end position="281"/>
    </location>
</feature>
<feature type="transmembrane region" description="Helical" evidence="1">
    <location>
        <begin position="297"/>
        <end position="317"/>
    </location>
</feature>
<feature type="transmembrane region" description="Helical" evidence="1">
    <location>
        <begin position="336"/>
        <end position="356"/>
    </location>
</feature>
<comment type="function">
    <text evidence="1">NDH-1 shuttles electrons from NADH, via FMN and iron-sulfur (Fe-S) centers, to quinones in the respiratory chain. The immediate electron acceptor for the enzyme in this species is believed to be ubiquinone. Couples the redox reaction to proton translocation (for every two electrons transferred, four hydrogen ions are translocated across the cytoplasmic membrane), and thus conserves the redox energy in a proton gradient. This subunit may bind ubiquinone.</text>
</comment>
<comment type="catalytic activity">
    <reaction evidence="1">
        <text>a quinone + NADH + 5 H(+)(in) = a quinol + NAD(+) + 4 H(+)(out)</text>
        <dbReference type="Rhea" id="RHEA:57888"/>
        <dbReference type="ChEBI" id="CHEBI:15378"/>
        <dbReference type="ChEBI" id="CHEBI:24646"/>
        <dbReference type="ChEBI" id="CHEBI:57540"/>
        <dbReference type="ChEBI" id="CHEBI:57945"/>
        <dbReference type="ChEBI" id="CHEBI:132124"/>
    </reaction>
</comment>
<comment type="subunit">
    <text evidence="1">NDH-1 is composed of 14 different subunits. Subunits NuoA, H, J, K, L, M, N constitute the membrane sector of the complex.</text>
</comment>
<comment type="subcellular location">
    <subcellularLocation>
        <location evidence="1">Cell inner membrane</location>
        <topology evidence="1">Multi-pass membrane protein</topology>
    </subcellularLocation>
</comment>
<comment type="similarity">
    <text evidence="1">Belongs to the complex I subunit 1 family.</text>
</comment>
<proteinExistence type="inferred from homology"/>
<organism>
    <name type="scientific">Verminephrobacter eiseniae (strain EF01-2)</name>
    <dbReference type="NCBI Taxonomy" id="391735"/>
    <lineage>
        <taxon>Bacteria</taxon>
        <taxon>Pseudomonadati</taxon>
        <taxon>Pseudomonadota</taxon>
        <taxon>Betaproteobacteria</taxon>
        <taxon>Burkholderiales</taxon>
        <taxon>Comamonadaceae</taxon>
        <taxon>Verminephrobacter</taxon>
    </lineage>
</organism>
<protein>
    <recommendedName>
        <fullName evidence="1">NADH-quinone oxidoreductase subunit H</fullName>
        <ecNumber evidence="1">7.1.1.-</ecNumber>
    </recommendedName>
    <alternativeName>
        <fullName evidence="1">NADH dehydrogenase I subunit H</fullName>
    </alternativeName>
    <alternativeName>
        <fullName evidence="1">NDH-1 subunit H</fullName>
    </alternativeName>
</protein>
<keyword id="KW-0997">Cell inner membrane</keyword>
<keyword id="KW-1003">Cell membrane</keyword>
<keyword id="KW-0472">Membrane</keyword>
<keyword id="KW-0520">NAD</keyword>
<keyword id="KW-0874">Quinone</keyword>
<keyword id="KW-1185">Reference proteome</keyword>
<keyword id="KW-1278">Translocase</keyword>
<keyword id="KW-0812">Transmembrane</keyword>
<keyword id="KW-1133">Transmembrane helix</keyword>
<keyword id="KW-0830">Ubiquinone</keyword>
<accession>A1WLN7</accession>
<dbReference type="EC" id="7.1.1.-" evidence="1"/>
<dbReference type="EMBL" id="CP000542">
    <property type="protein sequence ID" value="ABM58544.1"/>
    <property type="molecule type" value="Genomic_DNA"/>
</dbReference>
<dbReference type="RefSeq" id="WP_011810541.1">
    <property type="nucleotide sequence ID" value="NC_008786.1"/>
</dbReference>
<dbReference type="SMR" id="A1WLN7"/>
<dbReference type="STRING" id="391735.Veis_2806"/>
<dbReference type="GeneID" id="76461304"/>
<dbReference type="KEGG" id="vei:Veis_2806"/>
<dbReference type="eggNOG" id="COG1005">
    <property type="taxonomic scope" value="Bacteria"/>
</dbReference>
<dbReference type="HOGENOM" id="CLU_015134_0_1_4"/>
<dbReference type="OrthoDB" id="9803734at2"/>
<dbReference type="Proteomes" id="UP000000374">
    <property type="component" value="Chromosome"/>
</dbReference>
<dbReference type="GO" id="GO:0005886">
    <property type="term" value="C:plasma membrane"/>
    <property type="evidence" value="ECO:0007669"/>
    <property type="project" value="UniProtKB-SubCell"/>
</dbReference>
<dbReference type="GO" id="GO:0003954">
    <property type="term" value="F:NADH dehydrogenase activity"/>
    <property type="evidence" value="ECO:0007669"/>
    <property type="project" value="TreeGrafter"/>
</dbReference>
<dbReference type="GO" id="GO:0016655">
    <property type="term" value="F:oxidoreductase activity, acting on NAD(P)H, quinone or similar compound as acceptor"/>
    <property type="evidence" value="ECO:0007669"/>
    <property type="project" value="UniProtKB-UniRule"/>
</dbReference>
<dbReference type="GO" id="GO:0048038">
    <property type="term" value="F:quinone binding"/>
    <property type="evidence" value="ECO:0007669"/>
    <property type="project" value="UniProtKB-KW"/>
</dbReference>
<dbReference type="GO" id="GO:0009060">
    <property type="term" value="P:aerobic respiration"/>
    <property type="evidence" value="ECO:0007669"/>
    <property type="project" value="TreeGrafter"/>
</dbReference>
<dbReference type="HAMAP" id="MF_01350">
    <property type="entry name" value="NDH1_NuoH"/>
    <property type="match status" value="1"/>
</dbReference>
<dbReference type="InterPro" id="IPR001694">
    <property type="entry name" value="NADH_UbQ_OxRdtase_su1/FPO"/>
</dbReference>
<dbReference type="InterPro" id="IPR018086">
    <property type="entry name" value="NADH_UbQ_OxRdtase_su1_CS"/>
</dbReference>
<dbReference type="NCBIfam" id="NF004741">
    <property type="entry name" value="PRK06076.1-2"/>
    <property type="match status" value="1"/>
</dbReference>
<dbReference type="NCBIfam" id="NF004742">
    <property type="entry name" value="PRK06076.1-3"/>
    <property type="match status" value="1"/>
</dbReference>
<dbReference type="PANTHER" id="PTHR11432">
    <property type="entry name" value="NADH DEHYDROGENASE SUBUNIT 1"/>
    <property type="match status" value="1"/>
</dbReference>
<dbReference type="PANTHER" id="PTHR11432:SF3">
    <property type="entry name" value="NADH-UBIQUINONE OXIDOREDUCTASE CHAIN 1"/>
    <property type="match status" value="1"/>
</dbReference>
<dbReference type="Pfam" id="PF00146">
    <property type="entry name" value="NADHdh"/>
    <property type="match status" value="1"/>
</dbReference>
<dbReference type="PROSITE" id="PS00667">
    <property type="entry name" value="COMPLEX1_ND1_1"/>
    <property type="match status" value="1"/>
</dbReference>
<dbReference type="PROSITE" id="PS00668">
    <property type="entry name" value="COMPLEX1_ND1_2"/>
    <property type="match status" value="1"/>
</dbReference>